<keyword id="KW-0106">Calcium</keyword>
<keyword id="KW-0963">Cytoplasm</keyword>
<keyword id="KW-0903">Direct protein sequencing</keyword>
<keyword id="KW-0479">Metal-binding</keyword>
<keyword id="KW-0488">Methylation</keyword>
<keyword id="KW-0505">Motor protein</keyword>
<keyword id="KW-0514">Muscle protein</keyword>
<keyword id="KW-0518">Myosin</keyword>
<keyword id="KW-0597">Phosphoprotein</keyword>
<keyword id="KW-1185">Reference proteome</keyword>
<keyword id="KW-0677">Repeat</keyword>
<proteinExistence type="evidence at protein level"/>
<organism>
    <name type="scientific">Oryctolagus cuniculus</name>
    <name type="common">Rabbit</name>
    <dbReference type="NCBI Taxonomy" id="9986"/>
    <lineage>
        <taxon>Eukaryota</taxon>
        <taxon>Metazoa</taxon>
        <taxon>Chordata</taxon>
        <taxon>Craniata</taxon>
        <taxon>Vertebrata</taxon>
        <taxon>Euteleostomi</taxon>
        <taxon>Mammalia</taxon>
        <taxon>Eutheria</taxon>
        <taxon>Euarchontoglires</taxon>
        <taxon>Glires</taxon>
        <taxon>Lagomorpha</taxon>
        <taxon>Leporidae</taxon>
        <taxon>Oryctolagus</taxon>
    </lineage>
</organism>
<reference evidence="8" key="1">
    <citation type="submission" date="2005-05" db="EMBL/GenBank/DDBJ databases">
        <title>Annotating the human genome using low coverage mammalian genomes.</title>
        <authorList>
            <person name="Lindblad-Toh K."/>
            <person name="Chang J.L."/>
            <person name="Gnerre S."/>
            <person name="Clamp M."/>
            <person name="Lander E.S."/>
        </authorList>
    </citation>
    <scope>NUCLEOTIDE SEQUENCE [GENOMIC DNA] OF 2-31</scope>
</reference>
<reference evidence="10" key="2">
    <citation type="journal article" date="1986" name="Biosci. Rep.">
        <title>Amino acid sequence of rabbit ventricular myosin light chain-2: identity with the slow skeletal muscle isoform.</title>
        <authorList>
            <person name="Collins J.H."/>
            <person name="Theibert J.L."/>
            <person name="Dalla Libera L."/>
        </authorList>
    </citation>
    <scope>PROTEIN SEQUENCE OF 14-165</scope>
</reference>
<comment type="function">
    <text evidence="2 4">Contractile protein that plays a role in heart development and function (By similarity). Following phosphorylation, plays a role in cross-bridge cycling kinetics and cardiac muscle contraction by increasing myosin lever arm stiffness and promoting myosin head diffusion; as a consequence of the increase in maximum contraction force and calcium sensitivity of contraction force. These events altogether slow down myosin kinetics and prolong duty cycle resulting in accumulated myosins being cooperatively recruited to actin binding sites to sustain thin filament activation as a means to fine-tune myofilament calcium sensitivity to force (By similarity). During cardiogenesis plays an early role in cardiac contractility by promoting cardiac myofibril assembly (By similarity).</text>
</comment>
<comment type="subunit">
    <text evidence="1 3">Myosin is a hexamer of 2 heavy chains and 4 light chains (By similarity). Interacts with MYOC (By similarity).</text>
</comment>
<comment type="subcellular location">
    <subcellularLocation>
        <location evidence="2">Cytoplasm</location>
        <location evidence="2">Myofibril</location>
        <location evidence="2">Sarcomere</location>
        <location evidence="2">A band</location>
    </subcellularLocation>
</comment>
<comment type="PTM">
    <text evidence="4">N-terminus is methylated by METTL11A/NTM1.</text>
</comment>
<comment type="PTM">
    <text evidence="2 4">Phosphorylated by MYLK3 and MYLK2; promotes cardiac muscle contraction and function (By similarity). Dephosphorylated by PPP1CB complexed to PPP1R12B (By similarity). The phosphorylated form in adult is expressed as gradients across the heart from endocardium (low phosphorylation) to epicardium (high phosphorylation); regulates cardiac torsion and workload distribution (By similarity).</text>
</comment>
<comment type="miscellaneous">
    <text evidence="6">This chain binds calcium.</text>
</comment>
<evidence type="ECO:0000250" key="1"/>
<evidence type="ECO:0000250" key="2">
    <source>
        <dbReference type="UniProtKB" id="P08733"/>
    </source>
</evidence>
<evidence type="ECO:0000250" key="3">
    <source>
        <dbReference type="UniProtKB" id="P10916"/>
    </source>
</evidence>
<evidence type="ECO:0000250" key="4">
    <source>
        <dbReference type="UniProtKB" id="P51667"/>
    </source>
</evidence>
<evidence type="ECO:0000250" key="5">
    <source>
        <dbReference type="UniProtKB" id="Q3SZE5"/>
    </source>
</evidence>
<evidence type="ECO:0000255" key="6"/>
<evidence type="ECO:0000255" key="7">
    <source>
        <dbReference type="PROSITE-ProRule" id="PRU00448"/>
    </source>
</evidence>
<evidence type="ECO:0000305" key="8"/>
<evidence type="ECO:0000305" key="9">
    <source>
    </source>
</evidence>
<evidence type="ECO:0000312" key="10">
    <source>
        <dbReference type="PIR" id="A61567"/>
    </source>
</evidence>
<gene>
    <name evidence="3" type="primary">MYL2</name>
</gene>
<dbReference type="EMBL" id="AAGW01124952">
    <property type="status" value="NOT_ANNOTATED_CDS"/>
    <property type="molecule type" value="Genomic_DNA"/>
</dbReference>
<dbReference type="PIR" id="A61567">
    <property type="entry name" value="A61567"/>
</dbReference>
<dbReference type="SMR" id="Q7M2V4"/>
<dbReference type="FunCoup" id="Q7M2V4">
    <property type="interactions" value="46"/>
</dbReference>
<dbReference type="STRING" id="9986.ENSOCUP00000028408"/>
<dbReference type="PaxDb" id="9986-ENSOCUP00000015748"/>
<dbReference type="eggNOG" id="KOG0031">
    <property type="taxonomic scope" value="Eukaryota"/>
</dbReference>
<dbReference type="InParanoid" id="Q7M2V4"/>
<dbReference type="Proteomes" id="UP000001811">
    <property type="component" value="Unplaced"/>
</dbReference>
<dbReference type="GO" id="GO:0031672">
    <property type="term" value="C:A band"/>
    <property type="evidence" value="ECO:0007669"/>
    <property type="project" value="UniProtKB-SubCell"/>
</dbReference>
<dbReference type="GO" id="GO:0016459">
    <property type="term" value="C:myosin complex"/>
    <property type="evidence" value="ECO:0007669"/>
    <property type="project" value="UniProtKB-KW"/>
</dbReference>
<dbReference type="GO" id="GO:0005509">
    <property type="term" value="F:calcium ion binding"/>
    <property type="evidence" value="ECO:0007669"/>
    <property type="project" value="InterPro"/>
</dbReference>
<dbReference type="GO" id="GO:0008307">
    <property type="term" value="F:structural constituent of muscle"/>
    <property type="evidence" value="ECO:0000250"/>
    <property type="project" value="UniProtKB"/>
</dbReference>
<dbReference type="GO" id="GO:0060047">
    <property type="term" value="P:heart contraction"/>
    <property type="evidence" value="ECO:0000250"/>
    <property type="project" value="UniProtKB"/>
</dbReference>
<dbReference type="GO" id="GO:0007507">
    <property type="term" value="P:heart development"/>
    <property type="evidence" value="ECO:0000250"/>
    <property type="project" value="UniProtKB"/>
</dbReference>
<dbReference type="GO" id="GO:0098735">
    <property type="term" value="P:positive regulation of the force of heart contraction"/>
    <property type="evidence" value="ECO:0000250"/>
    <property type="project" value="UniProtKB"/>
</dbReference>
<dbReference type="GO" id="GO:0002026">
    <property type="term" value="P:regulation of the force of heart contraction"/>
    <property type="evidence" value="ECO:0000250"/>
    <property type="project" value="UniProtKB"/>
</dbReference>
<dbReference type="CDD" id="cd00051">
    <property type="entry name" value="EFh"/>
    <property type="match status" value="1"/>
</dbReference>
<dbReference type="FunFam" id="1.10.238.10:FF:000010">
    <property type="entry name" value="Myosin regulatory light chain 2, atrial isoform"/>
    <property type="match status" value="1"/>
</dbReference>
<dbReference type="FunFam" id="1.10.238.10:FF:000007">
    <property type="entry name" value="Putative myosin regulatory light chain sqh"/>
    <property type="match status" value="1"/>
</dbReference>
<dbReference type="Gene3D" id="1.10.238.10">
    <property type="entry name" value="EF-hand"/>
    <property type="match status" value="2"/>
</dbReference>
<dbReference type="InterPro" id="IPR011992">
    <property type="entry name" value="EF-hand-dom_pair"/>
</dbReference>
<dbReference type="InterPro" id="IPR018247">
    <property type="entry name" value="EF_Hand_1_Ca_BS"/>
</dbReference>
<dbReference type="InterPro" id="IPR002048">
    <property type="entry name" value="EF_hand_dom"/>
</dbReference>
<dbReference type="InterPro" id="IPR050403">
    <property type="entry name" value="Myosin_RLC"/>
</dbReference>
<dbReference type="PANTHER" id="PTHR23049">
    <property type="entry name" value="MYOSIN REGULATORY LIGHT CHAIN 2"/>
    <property type="match status" value="1"/>
</dbReference>
<dbReference type="Pfam" id="PF13499">
    <property type="entry name" value="EF-hand_7"/>
    <property type="match status" value="1"/>
</dbReference>
<dbReference type="SMART" id="SM00054">
    <property type="entry name" value="EFh"/>
    <property type="match status" value="3"/>
</dbReference>
<dbReference type="SUPFAM" id="SSF47473">
    <property type="entry name" value="EF-hand"/>
    <property type="match status" value="1"/>
</dbReference>
<dbReference type="PROSITE" id="PS00018">
    <property type="entry name" value="EF_HAND_1"/>
    <property type="match status" value="1"/>
</dbReference>
<dbReference type="PROSITE" id="PS50222">
    <property type="entry name" value="EF_HAND_2"/>
    <property type="match status" value="3"/>
</dbReference>
<accession>Q7M2V4</accession>
<name>MLRV_RABIT</name>
<sequence>MSPKKAKKRAEGANSNVFSMFEQTQIQEFKEAFTIMDQNRDGFIDKNDLRDTFAALGRVNVKNEEIDEMIKEAPGPINFTVFLTMFGEKLKGADPEETILNAFKVFDPEGKGVLKADYVREMLTTQAERFSKDEIDQMFAAFPPDVTGNLDYKNLVHIITHGEEK</sequence>
<protein>
    <recommendedName>
        <fullName evidence="8">Myosin regulatory light chain 2, ventricular/cardiac muscle isoform</fullName>
        <shortName evidence="4">MLC-2</shortName>
        <shortName>MLC-2v</shortName>
    </recommendedName>
    <alternativeName>
        <fullName evidence="9">Myosin light chain 2, slow skeletal/ventricular muscle isoform</fullName>
        <shortName evidence="9">MLC-2s/v</shortName>
    </alternativeName>
</protein>
<feature type="initiator methionine" description="Removed" evidence="5">
    <location>
        <position position="1"/>
    </location>
</feature>
<feature type="chain" id="PRO_0000282967" description="Myosin regulatory light chain 2, ventricular/cardiac muscle isoform" evidence="3">
    <location>
        <begin position="2"/>
        <end position="165"/>
    </location>
</feature>
<feature type="domain" description="EF-hand 1" evidence="7">
    <location>
        <begin position="24"/>
        <end position="59"/>
    </location>
</feature>
<feature type="domain" description="EF-hand 2" evidence="7">
    <location>
        <begin position="94"/>
        <end position="129"/>
    </location>
</feature>
<feature type="domain" description="EF-hand 3" evidence="7">
    <location>
        <begin position="130"/>
        <end position="165"/>
    </location>
</feature>
<feature type="binding site" evidence="7">
    <location>
        <position position="37"/>
    </location>
    <ligand>
        <name>Ca(2+)</name>
        <dbReference type="ChEBI" id="CHEBI:29108"/>
    </ligand>
</feature>
<feature type="binding site" evidence="7">
    <location>
        <position position="39"/>
    </location>
    <ligand>
        <name>Ca(2+)</name>
        <dbReference type="ChEBI" id="CHEBI:29108"/>
    </ligand>
</feature>
<feature type="binding site" evidence="7">
    <location>
        <position position="41"/>
    </location>
    <ligand>
        <name>Ca(2+)</name>
        <dbReference type="ChEBI" id="CHEBI:29108"/>
    </ligand>
</feature>
<feature type="binding site" evidence="7">
    <location>
        <position position="48"/>
    </location>
    <ligand>
        <name>Ca(2+)</name>
        <dbReference type="ChEBI" id="CHEBI:29108"/>
    </ligand>
</feature>
<feature type="modified residue" description="N,N,N-trimethylserine" evidence="5">
    <location>
        <position position="2"/>
    </location>
</feature>
<feature type="modified residue" description="Deamidated asparagine" evidence="3">
    <location>
        <position position="14"/>
    </location>
</feature>
<feature type="modified residue" description="Phosphoserine" evidence="3">
    <location>
        <position position="15"/>
    </location>
</feature>
<feature type="modified residue" description="Phosphoserine" evidence="4">
    <location>
        <position position="19"/>
    </location>
</feature>
<feature type="modified residue" description="Phosphothreonine" evidence="2">
    <location>
        <position position="52"/>
    </location>
</feature>